<reference key="1">
    <citation type="journal article" date="1995" name="Mol. Biol. Cell">
        <title>The Neurospora organelle motor: a distant relative of conventional kinesin with unconventional properties.</title>
        <authorList>
            <person name="Steinberg G."/>
            <person name="Schliwa M."/>
        </authorList>
    </citation>
    <scope>NUCLEOTIDE SEQUENCE [MRNA]</scope>
    <scope>PARTIAL PROTEIN SEQUENCE</scope>
    <source>
        <strain>74A</strain>
    </source>
</reference>
<reference key="2">
    <citation type="submission" date="1997-03" db="EMBL/GenBank/DDBJ databases">
        <authorList>
            <person name="Kirchner J."/>
        </authorList>
    </citation>
    <scope>SEQUENCE REVISION</scope>
</reference>
<reference key="3">
    <citation type="journal article" date="2003" name="Nature">
        <title>The genome sequence of the filamentous fungus Neurospora crassa.</title>
        <authorList>
            <person name="Galagan J.E."/>
            <person name="Calvo S.E."/>
            <person name="Borkovich K.A."/>
            <person name="Selker E.U."/>
            <person name="Read N.D."/>
            <person name="Jaffe D.B."/>
            <person name="FitzHugh W."/>
            <person name="Ma L.-J."/>
            <person name="Smirnov S."/>
            <person name="Purcell S."/>
            <person name="Rehman B."/>
            <person name="Elkins T."/>
            <person name="Engels R."/>
            <person name="Wang S."/>
            <person name="Nielsen C.B."/>
            <person name="Butler J."/>
            <person name="Endrizzi M."/>
            <person name="Qui D."/>
            <person name="Ianakiev P."/>
            <person name="Bell-Pedersen D."/>
            <person name="Nelson M.A."/>
            <person name="Werner-Washburne M."/>
            <person name="Selitrennikoff C.P."/>
            <person name="Kinsey J.A."/>
            <person name="Braun E.L."/>
            <person name="Zelter A."/>
            <person name="Schulte U."/>
            <person name="Kothe G.O."/>
            <person name="Jedd G."/>
            <person name="Mewes H.-W."/>
            <person name="Staben C."/>
            <person name="Marcotte E."/>
            <person name="Greenberg D."/>
            <person name="Roy A."/>
            <person name="Foley K."/>
            <person name="Naylor J."/>
            <person name="Stange-Thomann N."/>
            <person name="Barrett R."/>
            <person name="Gnerre S."/>
            <person name="Kamal M."/>
            <person name="Kamvysselis M."/>
            <person name="Mauceli E.W."/>
            <person name="Bielke C."/>
            <person name="Rudd S."/>
            <person name="Frishman D."/>
            <person name="Krystofova S."/>
            <person name="Rasmussen C."/>
            <person name="Metzenberg R.L."/>
            <person name="Perkins D.D."/>
            <person name="Kroken S."/>
            <person name="Cogoni C."/>
            <person name="Macino G."/>
            <person name="Catcheside D.E.A."/>
            <person name="Li W."/>
            <person name="Pratt R.J."/>
            <person name="Osmani S.A."/>
            <person name="DeSouza C.P.C."/>
            <person name="Glass N.L."/>
            <person name="Orbach M.J."/>
            <person name="Berglund J.A."/>
            <person name="Voelker R."/>
            <person name="Yarden O."/>
            <person name="Plamann M."/>
            <person name="Seiler S."/>
            <person name="Dunlap J.C."/>
            <person name="Radford A."/>
            <person name="Aramayo R."/>
            <person name="Natvig D.O."/>
            <person name="Alex L.A."/>
            <person name="Mannhaupt G."/>
            <person name="Ebbole D.J."/>
            <person name="Freitag M."/>
            <person name="Paulsen I."/>
            <person name="Sachs M.S."/>
            <person name="Lander E.S."/>
            <person name="Nusbaum C."/>
            <person name="Birren B.W."/>
        </authorList>
    </citation>
    <scope>NUCLEOTIDE SEQUENCE [LARGE SCALE GENOMIC DNA]</scope>
    <source>
        <strain>ATCC 24698 / 74-OR23-1A / CBS 708.71 / DSM 1257 / FGSC 987</strain>
    </source>
</reference>
<reference key="4">
    <citation type="journal article" date="2001" name="EMBO J.">
        <title>Structure of a fast kinesin: implications for ATPase mechanism and interactions with microtubules.</title>
        <authorList>
            <person name="Song Y.-H."/>
            <person name="Marx A."/>
            <person name="Muller J."/>
            <person name="Woehlke G."/>
            <person name="Schliwa M."/>
            <person name="Krebs A."/>
            <person name="Hoenger A."/>
            <person name="Mandelkow E."/>
        </authorList>
    </citation>
    <scope>X-RAY CRYSTALLOGRAPHY (2.3 ANGSTROMS) OF 1-355 IN COMPLEX WITH ADP</scope>
</reference>
<protein>
    <recommendedName>
        <fullName>Kinesin heavy chain</fullName>
    </recommendedName>
</protein>
<accession>P48467</accession>
<accession>Q7RVK5</accession>
<evidence type="ECO:0000255" key="1"/>
<evidence type="ECO:0000255" key="2">
    <source>
        <dbReference type="PROSITE-ProRule" id="PRU00283"/>
    </source>
</evidence>
<evidence type="ECO:0000256" key="3">
    <source>
        <dbReference type="SAM" id="MobiDB-lite"/>
    </source>
</evidence>
<evidence type="ECO:0000305" key="4"/>
<evidence type="ECO:0007829" key="5">
    <source>
        <dbReference type="PDB" id="1GOJ"/>
    </source>
</evidence>
<proteinExistence type="evidence at protein level"/>
<dbReference type="EMBL" id="L47106">
    <property type="protein sequence ID" value="AAB52961.1"/>
    <property type="molecule type" value="mRNA"/>
</dbReference>
<dbReference type="EMBL" id="CM002239">
    <property type="protein sequence ID" value="EAA35196.2"/>
    <property type="molecule type" value="Genomic_DNA"/>
</dbReference>
<dbReference type="PIR" id="T10164">
    <property type="entry name" value="T10164"/>
</dbReference>
<dbReference type="PDB" id="1GOJ">
    <property type="method" value="X-ray"/>
    <property type="resolution" value="2.30 A"/>
    <property type="chains" value="A=1-355"/>
</dbReference>
<dbReference type="PDBsum" id="1GOJ"/>
<dbReference type="SMR" id="P48467"/>
<dbReference type="FunCoup" id="P48467">
    <property type="interactions" value="73"/>
</dbReference>
<dbReference type="STRING" id="367110.P48467"/>
<dbReference type="PaxDb" id="5141-EFNCRP00000009482"/>
<dbReference type="EnsemblFungi" id="EAA35196">
    <property type="protein sequence ID" value="EAA35196"/>
    <property type="gene ID" value="NCU09730"/>
</dbReference>
<dbReference type="KEGG" id="ncr:NCU09730"/>
<dbReference type="VEuPathDB" id="FungiDB:NCU09730"/>
<dbReference type="HOGENOM" id="CLU_001485_3_1_1"/>
<dbReference type="InParanoid" id="P48467"/>
<dbReference type="OMA" id="FPMGTKQ"/>
<dbReference type="OrthoDB" id="3176171at2759"/>
<dbReference type="EvolutionaryTrace" id="P48467"/>
<dbReference type="Proteomes" id="UP000001805">
    <property type="component" value="Chromosome 4, Linkage Group IV"/>
</dbReference>
<dbReference type="GO" id="GO:0005737">
    <property type="term" value="C:cytoplasm"/>
    <property type="evidence" value="ECO:0000318"/>
    <property type="project" value="GO_Central"/>
</dbReference>
<dbReference type="GO" id="GO:0005871">
    <property type="term" value="C:kinesin complex"/>
    <property type="evidence" value="ECO:0000318"/>
    <property type="project" value="GO_Central"/>
</dbReference>
<dbReference type="GO" id="GO:0005874">
    <property type="term" value="C:microtubule"/>
    <property type="evidence" value="ECO:0000318"/>
    <property type="project" value="GO_Central"/>
</dbReference>
<dbReference type="GO" id="GO:0015630">
    <property type="term" value="C:microtubule cytoskeleton"/>
    <property type="evidence" value="ECO:0000314"/>
    <property type="project" value="CAFA"/>
</dbReference>
<dbReference type="GO" id="GO:0005524">
    <property type="term" value="F:ATP binding"/>
    <property type="evidence" value="ECO:0007669"/>
    <property type="project" value="UniProtKB-KW"/>
</dbReference>
<dbReference type="GO" id="GO:0016887">
    <property type="term" value="F:ATP hydrolysis activity"/>
    <property type="evidence" value="ECO:0000318"/>
    <property type="project" value="GO_Central"/>
</dbReference>
<dbReference type="GO" id="GO:0008017">
    <property type="term" value="F:microtubule binding"/>
    <property type="evidence" value="ECO:0000318"/>
    <property type="project" value="GO_Central"/>
</dbReference>
<dbReference type="GO" id="GO:0099609">
    <property type="term" value="F:microtubule lateral binding"/>
    <property type="evidence" value="ECO:0000315"/>
    <property type="project" value="CAFA"/>
</dbReference>
<dbReference type="GO" id="GO:0008574">
    <property type="term" value="F:plus-end-directed microtubule motor activity"/>
    <property type="evidence" value="ECO:0000318"/>
    <property type="project" value="GO_Central"/>
</dbReference>
<dbReference type="GO" id="GO:0030705">
    <property type="term" value="P:cytoskeleton-dependent intracellular transport"/>
    <property type="evidence" value="ECO:0000318"/>
    <property type="project" value="GO_Central"/>
</dbReference>
<dbReference type="GO" id="GO:0007018">
    <property type="term" value="P:microtubule-based movement"/>
    <property type="evidence" value="ECO:0000318"/>
    <property type="project" value="GO_Central"/>
</dbReference>
<dbReference type="CDD" id="cd23649">
    <property type="entry name" value="Khc_CBD_cc"/>
    <property type="match status" value="1"/>
</dbReference>
<dbReference type="CDD" id="cd01369">
    <property type="entry name" value="KISc_KHC_KIF5"/>
    <property type="match status" value="1"/>
</dbReference>
<dbReference type="FunFam" id="3.40.850.10:FF:000031">
    <property type="entry name" value="Kinesin-like protein"/>
    <property type="match status" value="1"/>
</dbReference>
<dbReference type="Gene3D" id="3.40.850.10">
    <property type="entry name" value="Kinesin motor domain"/>
    <property type="match status" value="1"/>
</dbReference>
<dbReference type="InterPro" id="IPR027640">
    <property type="entry name" value="Kinesin-like_fam"/>
</dbReference>
<dbReference type="InterPro" id="IPR019821">
    <property type="entry name" value="Kinesin_motor_CS"/>
</dbReference>
<dbReference type="InterPro" id="IPR001752">
    <property type="entry name" value="Kinesin_motor_dom"/>
</dbReference>
<dbReference type="InterPro" id="IPR036961">
    <property type="entry name" value="Kinesin_motor_dom_sf"/>
</dbReference>
<dbReference type="InterPro" id="IPR027417">
    <property type="entry name" value="P-loop_NTPase"/>
</dbReference>
<dbReference type="PANTHER" id="PTHR47968">
    <property type="entry name" value="CENTROMERE PROTEIN E"/>
    <property type="match status" value="1"/>
</dbReference>
<dbReference type="PANTHER" id="PTHR47968:SF75">
    <property type="entry name" value="CENTROMERE-ASSOCIATED PROTEIN E"/>
    <property type="match status" value="1"/>
</dbReference>
<dbReference type="Pfam" id="PF00225">
    <property type="entry name" value="Kinesin"/>
    <property type="match status" value="1"/>
</dbReference>
<dbReference type="PRINTS" id="PR00380">
    <property type="entry name" value="KINESINHEAVY"/>
</dbReference>
<dbReference type="SMART" id="SM00129">
    <property type="entry name" value="KISc"/>
    <property type="match status" value="1"/>
</dbReference>
<dbReference type="SUPFAM" id="SSF52540">
    <property type="entry name" value="P-loop containing nucleoside triphosphate hydrolases"/>
    <property type="match status" value="1"/>
</dbReference>
<dbReference type="PROSITE" id="PS00411">
    <property type="entry name" value="KINESIN_MOTOR_1"/>
    <property type="match status" value="1"/>
</dbReference>
<dbReference type="PROSITE" id="PS50067">
    <property type="entry name" value="KINESIN_MOTOR_2"/>
    <property type="match status" value="1"/>
</dbReference>
<comment type="function">
    <text>Kinesin is a microtubule-associated force-producing protein that may play a role in organelle transport. Its motor activity is directed toward the microtubule's plus end.</text>
</comment>
<comment type="subcellular location">
    <subcellularLocation>
        <location evidence="4">Cytoplasm</location>
        <location evidence="4">Cytoskeleton</location>
    </subcellularLocation>
</comment>
<comment type="domain">
    <text>Composed of three structural domains: a large globular N-terminal domain which is responsible for the motor activity of kinesin (it hydrolyzes ATP and binds microtubule), a central alpha-helical coiled coil domain that mediates the heavy chain dimerization; and a small globular C-terminal domain which interacts with other proteins (such as the kinesin light chains), vesicles and membranous organelles.</text>
</comment>
<comment type="similarity">
    <text evidence="2">Belongs to the TRAFAC class myosin-kinesin ATPase superfamily. Kinesin family. Kinesin subfamily.</text>
</comment>
<name>KINH_NEUCR</name>
<gene>
    <name type="primary">kin</name>
    <name type="ORF">NCU09730</name>
</gene>
<sequence>MSSSANSIKVVARFRPQNRVEIESGGQPIVTFQGPDTCTVDSKEAQGSFTFDRVFDMSCKQSDIFDFSIKPTVDDILNGYNGTVFAYGQTGAGKSYTMMGTSIDDPDGRGVIPRIVEQIFTSILSSAANIEYTVRVSYMEIYMERIRDLLAPQNDNLPVHEEKNRGVYVKGLLEIYVSSVQEVYEVMRRGGNARAVAATNMNQESSRSHSIFVITITQKNVETGSAKSGQLFLVDLAGSEKVGKTGASGQTLEEAKKINKSLSALGMVINALTDGKSSHVPYRDSKLTRILQESLGGNSRTTLIINCSPSSYNDAETLSTLRFGMRAKSIKNKAKVNAELSPAELKQMLAKAKTQITSFENYIVNLESEVQVWRGGETVPKEKWVPPLELAITPSKSASTTARPSTPSRLLPESRAETPAISDRAGTPSLPLDKDEREEFLRRENELQDQIAEKESIAAAAERQLRETKEELIALKDHDSKLGKENERLISESNEFKMQLERLAFENKEAQITIDGLKDANSELTAELDEVKQQMLDMKMSAKETSAVLDEKEKKKAEKMAKMMAGFDLSGDVFSDNERAVADAIAQLDALFEISSAGDAIPPEDIKALREKLVETQGFVRQAELSSFSAASSDAEARKRAELEARLEALQQEHEELLSRNLTEADKEEVKALLAKSLSDKSAVQVELVEQLKADIALKNSETEHLKALVDDLQRRVKAGGAGVAMANGKTVQQQLAEFDVMKKSLMRDLQNRCERVVELEISLDETREQYNNVLRSSNNRAQQKKMAFLERNLEQLTQVQRQLVEQNSALKKEVAIAERKLMARNERIQSLESLLQESQEKMAQANHKFEVQLAAVKDRLEAAKAGSTRGLGTDAGLGGFSIGSRIAKPLRGGGDAVAGATATNPTIATLQQNPPENKRSSWFFQKS</sequence>
<organism>
    <name type="scientific">Neurospora crassa (strain ATCC 24698 / 74-OR23-1A / CBS 708.71 / DSM 1257 / FGSC 987)</name>
    <dbReference type="NCBI Taxonomy" id="367110"/>
    <lineage>
        <taxon>Eukaryota</taxon>
        <taxon>Fungi</taxon>
        <taxon>Dikarya</taxon>
        <taxon>Ascomycota</taxon>
        <taxon>Pezizomycotina</taxon>
        <taxon>Sordariomycetes</taxon>
        <taxon>Sordariomycetidae</taxon>
        <taxon>Sordariales</taxon>
        <taxon>Sordariaceae</taxon>
        <taxon>Neurospora</taxon>
    </lineage>
</organism>
<keyword id="KW-0002">3D-structure</keyword>
<keyword id="KW-0067">ATP-binding</keyword>
<keyword id="KW-0175">Coiled coil</keyword>
<keyword id="KW-0963">Cytoplasm</keyword>
<keyword id="KW-0206">Cytoskeleton</keyword>
<keyword id="KW-0903">Direct protein sequencing</keyword>
<keyword id="KW-0493">Microtubule</keyword>
<keyword id="KW-0505">Motor protein</keyword>
<keyword id="KW-0547">Nucleotide-binding</keyword>
<keyword id="KW-1185">Reference proteome</keyword>
<feature type="chain" id="PRO_0000125362" description="Kinesin heavy chain">
    <location>
        <begin position="1"/>
        <end position="928"/>
    </location>
</feature>
<feature type="domain" description="Kinesin motor" evidence="2">
    <location>
        <begin position="7"/>
        <end position="330"/>
    </location>
</feature>
<feature type="region of interest" description="Disordered" evidence="3">
    <location>
        <begin position="395"/>
        <end position="434"/>
    </location>
</feature>
<feature type="region of interest" description="Disordered" evidence="3">
    <location>
        <begin position="893"/>
        <end position="928"/>
    </location>
</feature>
<feature type="coiled-coil region" evidence="1">
    <location>
        <begin position="343"/>
        <end position="866"/>
    </location>
</feature>
<feature type="compositionally biased region" description="Low complexity" evidence="3">
    <location>
        <begin position="395"/>
        <end position="409"/>
    </location>
</feature>
<feature type="compositionally biased region" description="Polar residues" evidence="3">
    <location>
        <begin position="905"/>
        <end position="928"/>
    </location>
</feature>
<feature type="binding site">
    <location>
        <begin position="88"/>
        <end position="95"/>
    </location>
    <ligand>
        <name>ATP</name>
        <dbReference type="ChEBI" id="CHEBI:30616"/>
    </ligand>
</feature>
<feature type="binding site" evidence="2">
    <location>
        <begin position="238"/>
        <end position="245"/>
    </location>
    <ligand>
        <name>ATP</name>
        <dbReference type="ChEBI" id="CHEBI:30616"/>
    </ligand>
</feature>
<feature type="strand" evidence="5">
    <location>
        <begin position="9"/>
        <end position="14"/>
    </location>
</feature>
<feature type="helix" evidence="5">
    <location>
        <begin position="19"/>
        <end position="22"/>
    </location>
</feature>
<feature type="turn" evidence="5">
    <location>
        <begin position="23"/>
        <end position="25"/>
    </location>
</feature>
<feature type="strand" evidence="5">
    <location>
        <begin position="30"/>
        <end position="32"/>
    </location>
</feature>
<feature type="strand" evidence="5">
    <location>
        <begin position="37"/>
        <end position="40"/>
    </location>
</feature>
<feature type="strand" evidence="5">
    <location>
        <begin position="47"/>
        <end position="50"/>
    </location>
</feature>
<feature type="strand" evidence="5">
    <location>
        <begin position="52"/>
        <end position="55"/>
    </location>
</feature>
<feature type="helix" evidence="5">
    <location>
        <begin position="61"/>
        <end position="68"/>
    </location>
</feature>
<feature type="helix" evidence="5">
    <location>
        <begin position="70"/>
        <end position="76"/>
    </location>
</feature>
<feature type="turn" evidence="5">
    <location>
        <begin position="77"/>
        <end position="79"/>
    </location>
</feature>
<feature type="strand" evidence="5">
    <location>
        <begin position="82"/>
        <end position="87"/>
    </location>
</feature>
<feature type="helix" evidence="5">
    <location>
        <begin position="94"/>
        <end position="98"/>
    </location>
</feature>
<feature type="turn" evidence="5">
    <location>
        <begin position="106"/>
        <end position="108"/>
    </location>
</feature>
<feature type="helix" evidence="5">
    <location>
        <begin position="111"/>
        <end position="124"/>
    </location>
</feature>
<feature type="strand" evidence="5">
    <location>
        <begin position="130"/>
        <end position="142"/>
    </location>
</feature>
<feature type="strand" evidence="5">
    <location>
        <begin position="145"/>
        <end position="148"/>
    </location>
</feature>
<feature type="strand" evidence="5">
    <location>
        <begin position="159"/>
        <end position="162"/>
    </location>
</feature>
<feature type="turn" evidence="5">
    <location>
        <begin position="163"/>
        <end position="165"/>
    </location>
</feature>
<feature type="strand" evidence="5">
    <location>
        <begin position="166"/>
        <end position="169"/>
    </location>
</feature>
<feature type="helix" evidence="5">
    <location>
        <begin position="180"/>
        <end position="200"/>
    </location>
</feature>
<feature type="helix" evidence="5">
    <location>
        <begin position="205"/>
        <end position="207"/>
    </location>
</feature>
<feature type="strand" evidence="5">
    <location>
        <begin position="209"/>
        <end position="220"/>
    </location>
</feature>
<feature type="turn" evidence="5">
    <location>
        <begin position="221"/>
        <end position="223"/>
    </location>
</feature>
<feature type="strand" evidence="5">
    <location>
        <begin position="226"/>
        <end position="235"/>
    </location>
</feature>
<feature type="strand" evidence="5">
    <location>
        <begin position="245"/>
        <end position="247"/>
    </location>
</feature>
<feature type="turn" evidence="5">
    <location>
        <begin position="252"/>
        <end position="255"/>
    </location>
</feature>
<feature type="helix" evidence="5">
    <location>
        <begin position="256"/>
        <end position="258"/>
    </location>
</feature>
<feature type="helix" evidence="5">
    <location>
        <begin position="261"/>
        <end position="274"/>
    </location>
</feature>
<feature type="helix" evidence="5">
    <location>
        <begin position="282"/>
        <end position="284"/>
    </location>
</feature>
<feature type="helix" evidence="5">
    <location>
        <begin position="286"/>
        <end position="290"/>
    </location>
</feature>
<feature type="helix" evidence="5">
    <location>
        <begin position="292"/>
        <end position="294"/>
    </location>
</feature>
<feature type="strand" evidence="5">
    <location>
        <begin position="300"/>
        <end position="307"/>
    </location>
</feature>
<feature type="helix" evidence="5">
    <location>
        <begin position="311"/>
        <end position="313"/>
    </location>
</feature>
<feature type="helix" evidence="5">
    <location>
        <begin position="314"/>
        <end position="328"/>
    </location>
</feature>
<feature type="strand" evidence="5">
    <location>
        <begin position="338"/>
        <end position="341"/>
    </location>
</feature>
<feature type="strand" evidence="5">
    <location>
        <begin position="343"/>
        <end position="345"/>
    </location>
</feature>